<protein>
    <recommendedName>
        <fullName evidence="14">Glucokinase regulatory protein</fullName>
        <shortName evidence="13">GKRP</shortName>
        <shortName evidence="15">Glucokinase regulator</shortName>
    </recommendedName>
</protein>
<comment type="function">
    <text evidence="3 8 9">Regulates glucokinase (GCK) by forming an inactive complex with this enzyme (PubMed:23621087, PubMed:23733961). Acts by promoting GCK recruitment to the nucleus, possibly to provide a reserve of GCK that can be quickly released in the cytoplasm after a meal (PubMed:10456334). The affinity of GCKR for GCK is modulated by fructose metabolites: GCKR with bound fructose 6-phosphate has increased affinity for GCK, while GCKR with bound fructose 1-phosphate has strongly decreased affinity for GCK and does not inhibit GCK activity (PubMed:23621087, PubMed:23733961).</text>
</comment>
<comment type="subunit">
    <text evidence="3 8 9">Interacts (fructose 6-phosphate bound form) with GCK.</text>
</comment>
<comment type="interaction">
    <interactant intactId="EBI-709948">
        <id>Q14397</id>
    </interactant>
    <interactant intactId="EBI-709928">
        <id>P35557</id>
        <label>GCK</label>
    </interactant>
    <organismsDiffer>false</organismsDiffer>
    <experiments>5</experiments>
</comment>
<comment type="subcellular location">
    <subcellularLocation>
        <location evidence="3">Cytoplasm</location>
    </subcellularLocation>
    <subcellularLocation>
        <location evidence="3">Nucleus</location>
    </subcellularLocation>
    <subcellularLocation>
        <location evidence="1">Mitochondrion</location>
    </subcellularLocation>
    <text evidence="3">Under low glucose concentrations, GCKR associates with GCK and the inactive complex is recruited to the hepatocyte nucleus.</text>
</comment>
<comment type="alternative products">
    <event type="alternative splicing"/>
    <isoform>
        <id>Q14397-1</id>
        <name>1</name>
        <sequence type="displayed"/>
    </isoform>
    <isoform>
        <id>Q14397-2</id>
        <name>2</name>
        <sequence type="described" ref="VSP_054853 VSP_054854"/>
    </isoform>
</comment>
<comment type="tissue specificity">
    <text evidence="7 10">Found in liver and pancreas. Not detected in muscle, brain, heart, thymus, intestine, uterus, adipose tissue, kidney, adrenal, lung or spleen.</text>
</comment>
<comment type="domain">
    <text evidence="8">Fructose 1-phosphate and fructose 6-phosphate compete for the same binding site.</text>
</comment>
<comment type="polymorphism">
    <text evidence="5 6">Genetic variations in GCKR define the fasting plasma glucose levels quantitative trait locus 5 (FGQTL5) [MIM:613463] (PubMed:18556336, PubMed:18678614). The normal fasting plasma glucose level is defined as less than 100 mg glucose per deciliter plasma (5.55 mmol per liter). Higher fasting plasma glucose levels predict type 2 diabetes in young adults and increases the risk of mortality (PubMed:18556336, PubMed:18678614).</text>
</comment>
<comment type="similarity">
    <text evidence="16">Belongs to the GCKR family.</text>
</comment>
<feature type="chain" id="PRO_0000214826" description="Glucokinase regulatory protein">
    <location>
        <begin position="1"/>
        <end position="625"/>
    </location>
</feature>
<feature type="domain" description="SIS 1" evidence="2">
    <location>
        <begin position="90"/>
        <end position="286"/>
    </location>
</feature>
<feature type="domain" description="SIS 2" evidence="2">
    <location>
        <begin position="320"/>
        <end position="499"/>
    </location>
</feature>
<feature type="region of interest" description="Important for interaction with GCK" evidence="1">
    <location>
        <begin position="199"/>
        <end position="200"/>
    </location>
</feature>
<feature type="region of interest" description="Essential for interaction with GCK" evidence="9">
    <location>
        <begin position="463"/>
        <end position="465"/>
    </location>
</feature>
<feature type="binding site" evidence="8 18">
    <location>
        <begin position="109"/>
        <end position="110"/>
    </location>
    <ligand>
        <name>beta-D-fructose 1-phosphate</name>
        <dbReference type="ChEBI" id="CHEBI:138881"/>
    </ligand>
</feature>
<feature type="binding site" evidence="1">
    <location>
        <begin position="109"/>
        <end position="110"/>
    </location>
    <ligand>
        <name>beta-D-fructose 6-phosphate</name>
        <dbReference type="ChEBI" id="CHEBI:57634"/>
    </ligand>
</feature>
<feature type="binding site" evidence="8 18">
    <location>
        <position position="153"/>
    </location>
    <ligand>
        <name>beta-D-fructose 1-phosphate</name>
        <dbReference type="ChEBI" id="CHEBI:138881"/>
    </ligand>
</feature>
<feature type="binding site" evidence="8 18">
    <location>
        <begin position="179"/>
        <end position="181"/>
    </location>
    <ligand>
        <name>beta-D-fructose 1-phosphate</name>
        <dbReference type="ChEBI" id="CHEBI:138881"/>
    </ligand>
</feature>
<feature type="binding site" evidence="1">
    <location>
        <begin position="179"/>
        <end position="181"/>
    </location>
    <ligand>
        <name>beta-D-fructose 6-phosphate</name>
        <dbReference type="ChEBI" id="CHEBI:57634"/>
    </ligand>
</feature>
<feature type="binding site" evidence="8 18">
    <location>
        <position position="348"/>
    </location>
    <ligand>
        <name>beta-D-fructose 1-phosphate</name>
        <dbReference type="ChEBI" id="CHEBI:138881"/>
    </ligand>
</feature>
<feature type="binding site" evidence="8 18">
    <location>
        <position position="514"/>
    </location>
    <ligand>
        <name>beta-D-fructose 1-phosphate</name>
        <dbReference type="ChEBI" id="CHEBI:138881"/>
    </ligand>
</feature>
<feature type="binding site" evidence="1">
    <location>
        <position position="514"/>
    </location>
    <ligand>
        <name>beta-D-fructose 6-phosphate</name>
        <dbReference type="ChEBI" id="CHEBI:57634"/>
    </ligand>
</feature>
<feature type="splice variant" id="VSP_054853" description="In isoform 2." evidence="12">
    <original>SVVASRE</original>
    <variation>WLPGRRE</variation>
    <location>
        <begin position="144"/>
        <end position="150"/>
    </location>
</feature>
<feature type="splice variant" id="VSP_054854" description="In isoform 2." evidence="12">
    <location>
        <begin position="151"/>
        <end position="625"/>
    </location>
</feature>
<feature type="sequence variant" id="VAR_018849" description="In dbSNP:rs8179206." evidence="11">
    <original>E</original>
    <variation>G</variation>
    <location>
        <position position="77"/>
    </location>
</feature>
<feature type="sequence variant" id="VAR_018850" description="In dbSNP:rs8179212." evidence="11">
    <original>G</original>
    <variation>S</variation>
    <location>
        <position position="256"/>
    </location>
</feature>
<feature type="sequence variant" id="VAR_008906" description="Protective factor against diabetes type 2; correlated with high triglyceride levels and low fasting plasma glucose levels; the mutant protein is less efficiently regulated by physiological concentrations of fructose-6 phosphate; dbSNP:rs1260326." evidence="4 5 6 7 11">
    <original>P</original>
    <variation>L</variation>
    <location>
        <position position="446"/>
    </location>
</feature>
<feature type="sequence variant" id="VAR_018851" description="In dbSNP:rs8179249." evidence="11">
    <original>R</original>
    <variation>Q</variation>
    <location>
        <position position="540"/>
    </location>
</feature>
<feature type="mutagenesis site" description="No effect on inhibition of glucokinase." evidence="8">
    <original>KK</original>
    <variation>TT</variation>
    <location>
        <begin position="326"/>
        <end position="327"/>
    </location>
</feature>
<feature type="mutagenesis site" description="Impairs inhibition of glucokinase." evidence="9">
    <original>D</original>
    <variation>A</variation>
    <location>
        <position position="413"/>
    </location>
</feature>
<feature type="mutagenesis site" description="Impairs inhibition of glucokinase." evidence="8">
    <original>KK</original>
    <variation>TT</variation>
    <location>
        <begin position="450"/>
        <end position="451"/>
    </location>
</feature>
<feature type="mutagenesis site" description="Abolishes interaction with GCK. Abolishes inhibition of GCK." evidence="9">
    <original>LLF</original>
    <variation>ALA</variation>
    <location>
        <begin position="463"/>
        <end position="465"/>
    </location>
</feature>
<feature type="sequence conflict" description="In Ref. 2; CAB61828." evidence="16" ref="2">
    <original>P</original>
    <variation>V</variation>
    <location>
        <position position="251"/>
    </location>
</feature>
<feature type="sequence conflict" description="In Ref. 1; CAA88367." evidence="16" ref="1">
    <original>L</original>
    <variation>P</variation>
    <location>
        <position position="393"/>
    </location>
</feature>
<feature type="sequence conflict" description="In Ref. 1; CAA88367." evidence="16" ref="1">
    <original>H</original>
    <variation>R</variation>
    <location>
        <position position="560"/>
    </location>
</feature>
<feature type="turn" evidence="24">
    <location>
        <begin position="2"/>
        <end position="4"/>
    </location>
</feature>
<feature type="helix" evidence="24">
    <location>
        <begin position="5"/>
        <end position="7"/>
    </location>
</feature>
<feature type="turn" evidence="24">
    <location>
        <begin position="19"/>
        <end position="22"/>
    </location>
</feature>
<feature type="helix" evidence="20">
    <location>
        <begin position="23"/>
        <end position="26"/>
    </location>
</feature>
<feature type="helix" evidence="20">
    <location>
        <begin position="30"/>
        <end position="32"/>
    </location>
</feature>
<feature type="helix" evidence="24">
    <location>
        <begin position="36"/>
        <end position="38"/>
    </location>
</feature>
<feature type="helix" evidence="20">
    <location>
        <begin position="41"/>
        <end position="43"/>
    </location>
</feature>
<feature type="helix" evidence="20">
    <location>
        <begin position="46"/>
        <end position="58"/>
    </location>
</feature>
<feature type="helix" evidence="20">
    <location>
        <begin position="59"/>
        <end position="61"/>
    </location>
</feature>
<feature type="helix" evidence="20">
    <location>
        <begin position="77"/>
        <end position="94"/>
    </location>
</feature>
<feature type="strand" evidence="20">
    <location>
        <begin position="100"/>
        <end position="107"/>
    </location>
</feature>
<feature type="helix" evidence="20">
    <location>
        <begin position="108"/>
        <end position="127"/>
    </location>
</feature>
<feature type="strand" evidence="20">
    <location>
        <begin position="134"/>
        <end position="138"/>
    </location>
</feature>
<feature type="helix" evidence="20">
    <location>
        <begin position="143"/>
        <end position="146"/>
    </location>
</feature>
<feature type="helix" evidence="20">
    <location>
        <begin position="150"/>
        <end position="154"/>
    </location>
</feature>
<feature type="helix" evidence="20">
    <location>
        <begin position="156"/>
        <end position="167"/>
    </location>
</feature>
<feature type="strand" evidence="20">
    <location>
        <begin position="171"/>
        <end position="178"/>
    </location>
</feature>
<feature type="helix" evidence="20">
    <location>
        <begin position="185"/>
        <end position="195"/>
    </location>
</feature>
<feature type="turn" evidence="20">
    <location>
        <begin position="198"/>
        <end position="200"/>
    </location>
</feature>
<feature type="strand" evidence="20">
    <location>
        <begin position="201"/>
        <end position="206"/>
    </location>
</feature>
<feature type="helix" evidence="20">
    <location>
        <begin position="211"/>
        <end position="213"/>
    </location>
</feature>
<feature type="strand" evidence="24">
    <location>
        <begin position="222"/>
        <end position="224"/>
    </location>
</feature>
<feature type="helix" evidence="20">
    <location>
        <begin position="226"/>
        <end position="237"/>
    </location>
</feature>
<feature type="turn" evidence="20">
    <location>
        <begin position="238"/>
        <end position="240"/>
    </location>
</feature>
<feature type="strand" evidence="20">
    <location>
        <begin position="243"/>
        <end position="245"/>
    </location>
</feature>
<feature type="turn" evidence="20">
    <location>
        <begin position="258"/>
        <end position="260"/>
    </location>
</feature>
<feature type="helix" evidence="20">
    <location>
        <begin position="261"/>
        <end position="283"/>
    </location>
</feature>
<feature type="helix" evidence="20">
    <location>
        <begin position="289"/>
        <end position="307"/>
    </location>
</feature>
<feature type="helix" evidence="20">
    <location>
        <begin position="310"/>
        <end position="325"/>
    </location>
</feature>
<feature type="strand" evidence="20">
    <location>
        <begin position="330"/>
        <end position="335"/>
    </location>
</feature>
<feature type="helix" evidence="20">
    <location>
        <begin position="337"/>
        <end position="353"/>
    </location>
</feature>
<feature type="strand" evidence="20">
    <location>
        <begin position="359"/>
        <end position="366"/>
    </location>
</feature>
<feature type="turn" evidence="20">
    <location>
        <begin position="369"/>
        <end position="371"/>
    </location>
</feature>
<feature type="helix" evidence="20">
    <location>
        <begin position="375"/>
        <end position="377"/>
    </location>
</feature>
<feature type="turn" evidence="20">
    <location>
        <begin position="378"/>
        <end position="380"/>
    </location>
</feature>
<feature type="helix" evidence="20">
    <location>
        <begin position="383"/>
        <end position="385"/>
    </location>
</feature>
<feature type="helix" evidence="20">
    <location>
        <begin position="389"/>
        <end position="395"/>
    </location>
</feature>
<feature type="helix" evidence="20">
    <location>
        <begin position="397"/>
        <end position="399"/>
    </location>
</feature>
<feature type="strand" evidence="20">
    <location>
        <begin position="405"/>
        <end position="411"/>
    </location>
</feature>
<feature type="helix" evidence="20">
    <location>
        <begin position="416"/>
        <end position="427"/>
    </location>
</feature>
<feature type="strand" evidence="20">
    <location>
        <begin position="433"/>
        <end position="440"/>
    </location>
</feature>
<feature type="helix" evidence="20">
    <location>
        <begin position="447"/>
        <end position="452"/>
    </location>
</feature>
<feature type="strand" evidence="22">
    <location>
        <begin position="453"/>
        <end position="455"/>
    </location>
</feature>
<feature type="strand" evidence="20">
    <location>
        <begin position="457"/>
        <end position="461"/>
    </location>
</feature>
<feature type="turn" evidence="20">
    <location>
        <begin position="467"/>
        <end position="469"/>
    </location>
</feature>
<feature type="helix" evidence="20">
    <location>
        <begin position="470"/>
        <end position="495"/>
    </location>
</feature>
<feature type="turn" evidence="20">
    <location>
        <begin position="496"/>
        <end position="498"/>
    </location>
</feature>
<feature type="helix" evidence="20">
    <location>
        <begin position="513"/>
        <end position="527"/>
    </location>
</feature>
<feature type="helix" evidence="20">
    <location>
        <begin position="531"/>
        <end position="543"/>
    </location>
</feature>
<feature type="helix" evidence="20">
    <location>
        <begin position="550"/>
        <end position="553"/>
    </location>
</feature>
<feature type="helix" evidence="20">
    <location>
        <begin position="557"/>
        <end position="564"/>
    </location>
</feature>
<feature type="strand" evidence="23">
    <location>
        <begin position="567"/>
        <end position="569"/>
    </location>
</feature>
<feature type="helix" evidence="20">
    <location>
        <begin position="570"/>
        <end position="580"/>
    </location>
</feature>
<feature type="helix" evidence="20">
    <location>
        <begin position="584"/>
        <end position="592"/>
    </location>
</feature>
<feature type="strand" evidence="21">
    <location>
        <begin position="594"/>
        <end position="596"/>
    </location>
</feature>
<feature type="helix" evidence="20">
    <location>
        <begin position="597"/>
        <end position="605"/>
    </location>
</feature>
<accession>Q14397</accession>
<accession>A1L4C2</accession>
<accession>B4DPQ2</accession>
<accession>Q53RY6</accession>
<accession>Q99522</accession>
<keyword id="KW-0002">3D-structure</keyword>
<keyword id="KW-0025">Alternative splicing</keyword>
<keyword id="KW-0119">Carbohydrate metabolism</keyword>
<keyword id="KW-0963">Cytoplasm</keyword>
<keyword id="KW-0496">Mitochondrion</keyword>
<keyword id="KW-0539">Nucleus</keyword>
<keyword id="KW-1267">Proteomics identification</keyword>
<keyword id="KW-1185">Reference proteome</keyword>
<keyword id="KW-0677">Repeat</keyword>
<evidence type="ECO:0000250" key="1">
    <source>
        <dbReference type="UniProtKB" id="Q07071"/>
    </source>
</evidence>
<evidence type="ECO:0000255" key="2">
    <source>
        <dbReference type="PROSITE-ProRule" id="PRU00797"/>
    </source>
</evidence>
<evidence type="ECO:0000269" key="3">
    <source>
    </source>
</evidence>
<evidence type="ECO:0000269" key="4">
    <source>
    </source>
</evidence>
<evidence type="ECO:0000269" key="5">
    <source>
    </source>
</evidence>
<evidence type="ECO:0000269" key="6">
    <source>
    </source>
</evidence>
<evidence type="ECO:0000269" key="7">
    <source>
    </source>
</evidence>
<evidence type="ECO:0000269" key="8">
    <source>
    </source>
</evidence>
<evidence type="ECO:0000269" key="9">
    <source>
    </source>
</evidence>
<evidence type="ECO:0000269" key="10">
    <source>
    </source>
</evidence>
<evidence type="ECO:0000269" key="11">
    <source ref="3"/>
</evidence>
<evidence type="ECO:0000303" key="12">
    <source>
    </source>
</evidence>
<evidence type="ECO:0000303" key="13">
    <source>
    </source>
</evidence>
<evidence type="ECO:0000303" key="14">
    <source>
    </source>
</evidence>
<evidence type="ECO:0000303" key="15">
    <source>
    </source>
</evidence>
<evidence type="ECO:0000305" key="16"/>
<evidence type="ECO:0000312" key="17">
    <source>
        <dbReference type="HGNC" id="HGNC:4196"/>
    </source>
</evidence>
<evidence type="ECO:0007744" key="18">
    <source>
        <dbReference type="PDB" id="4BB9"/>
    </source>
</evidence>
<evidence type="ECO:0007744" key="19">
    <source>
        <dbReference type="PDB" id="4BBA"/>
    </source>
</evidence>
<evidence type="ECO:0007829" key="20">
    <source>
        <dbReference type="PDB" id="4BB9"/>
    </source>
</evidence>
<evidence type="ECO:0007829" key="21">
    <source>
        <dbReference type="PDB" id="4BBA"/>
    </source>
</evidence>
<evidence type="ECO:0007829" key="22">
    <source>
        <dbReference type="PDB" id="4OP2"/>
    </source>
</evidence>
<evidence type="ECO:0007829" key="23">
    <source>
        <dbReference type="PDB" id="4OP3"/>
    </source>
</evidence>
<evidence type="ECO:0007829" key="24">
    <source>
        <dbReference type="PDB" id="4PX2"/>
    </source>
</evidence>
<dbReference type="EMBL" id="Z48475">
    <property type="protein sequence ID" value="CAA88367.1"/>
    <property type="molecule type" value="mRNA"/>
</dbReference>
<dbReference type="EMBL" id="Y09593">
    <property type="protein sequence ID" value="CAA70779.2"/>
    <property type="molecule type" value="Genomic_DNA"/>
</dbReference>
<dbReference type="EMBL" id="Y09592">
    <property type="protein sequence ID" value="CAB61828.1"/>
    <property type="molecule type" value="Genomic_DNA"/>
</dbReference>
<dbReference type="EMBL" id="AY320034">
    <property type="protein sequence ID" value="AAP72013.1"/>
    <property type="molecule type" value="Genomic_DNA"/>
</dbReference>
<dbReference type="EMBL" id="AK298448">
    <property type="protein sequence ID" value="BAG60664.1"/>
    <property type="molecule type" value="mRNA"/>
</dbReference>
<dbReference type="EMBL" id="AC074117">
    <property type="protein sequence ID" value="AAY14850.1"/>
    <property type="molecule type" value="Genomic_DNA"/>
</dbReference>
<dbReference type="EMBL" id="BC130481">
    <property type="protein sequence ID" value="AAI30482.1"/>
    <property type="molecule type" value="mRNA"/>
</dbReference>
<dbReference type="EMBL" id="BC130483">
    <property type="protein sequence ID" value="AAI30484.1"/>
    <property type="molecule type" value="mRNA"/>
</dbReference>
<dbReference type="CCDS" id="CCDS1757.1">
    <molecule id="Q14397-1"/>
</dbReference>
<dbReference type="PIR" id="S52485">
    <property type="entry name" value="S52485"/>
</dbReference>
<dbReference type="RefSeq" id="NP_001477.2">
    <property type="nucleotide sequence ID" value="NM_001486.3"/>
</dbReference>
<dbReference type="PDB" id="4BB9">
    <property type="method" value="X-ray"/>
    <property type="resolution" value="1.47 A"/>
    <property type="chains" value="A=1-625"/>
</dbReference>
<dbReference type="PDB" id="4BBA">
    <property type="method" value="X-ray"/>
    <property type="resolution" value="1.92 A"/>
    <property type="chains" value="A=1-625"/>
</dbReference>
<dbReference type="PDB" id="4LY9">
    <property type="method" value="X-ray"/>
    <property type="resolution" value="2.35 A"/>
    <property type="chains" value="A/B=1-625"/>
</dbReference>
<dbReference type="PDB" id="4MQU">
    <property type="method" value="X-ray"/>
    <property type="resolution" value="2.22 A"/>
    <property type="chains" value="A/B=1-625"/>
</dbReference>
<dbReference type="PDB" id="4MRO">
    <property type="method" value="X-ray"/>
    <property type="resolution" value="2.20 A"/>
    <property type="chains" value="A/B=1-625"/>
</dbReference>
<dbReference type="PDB" id="4MSU">
    <property type="method" value="X-ray"/>
    <property type="resolution" value="2.50 A"/>
    <property type="chains" value="A/B=1-625"/>
</dbReference>
<dbReference type="PDB" id="4OHK">
    <property type="method" value="X-ray"/>
    <property type="resolution" value="2.80 A"/>
    <property type="chains" value="A/B=1-625"/>
</dbReference>
<dbReference type="PDB" id="4OHM">
    <property type="method" value="X-ray"/>
    <property type="resolution" value="2.40 A"/>
    <property type="chains" value="A/B=1-625"/>
</dbReference>
<dbReference type="PDB" id="4OHO">
    <property type="method" value="X-ray"/>
    <property type="resolution" value="2.58 A"/>
    <property type="chains" value="A/B=1-625"/>
</dbReference>
<dbReference type="PDB" id="4OHP">
    <property type="method" value="X-ray"/>
    <property type="resolution" value="2.40 A"/>
    <property type="chains" value="A/B=1-625"/>
</dbReference>
<dbReference type="PDB" id="4OLH">
    <property type="method" value="X-ray"/>
    <property type="resolution" value="2.40 A"/>
    <property type="chains" value="A/B=1-625"/>
</dbReference>
<dbReference type="PDB" id="4OP1">
    <property type="method" value="X-ray"/>
    <property type="resolution" value="2.39 A"/>
    <property type="chains" value="A/B=1-625"/>
</dbReference>
<dbReference type="PDB" id="4OP2">
    <property type="method" value="X-ray"/>
    <property type="resolution" value="2.24 A"/>
    <property type="chains" value="A/B=1-625"/>
</dbReference>
<dbReference type="PDB" id="4OP3">
    <property type="method" value="X-ray"/>
    <property type="resolution" value="2.82 A"/>
    <property type="chains" value="A/B=1-625"/>
</dbReference>
<dbReference type="PDB" id="4PX2">
    <property type="method" value="X-ray"/>
    <property type="resolution" value="2.15 A"/>
    <property type="chains" value="A/B=1-625"/>
</dbReference>
<dbReference type="PDB" id="4PX3">
    <property type="method" value="X-ray"/>
    <property type="resolution" value="2.43 A"/>
    <property type="chains" value="A/B=1-625"/>
</dbReference>
<dbReference type="PDB" id="4PX5">
    <property type="method" value="X-ray"/>
    <property type="resolution" value="2.20 A"/>
    <property type="chains" value="A/B=1-625"/>
</dbReference>
<dbReference type="PDB" id="4PXS">
    <property type="method" value="X-ray"/>
    <property type="resolution" value="2.60 A"/>
    <property type="chains" value="A/B=1-625"/>
</dbReference>
<dbReference type="PDBsum" id="4BB9"/>
<dbReference type="PDBsum" id="4BBA"/>
<dbReference type="PDBsum" id="4LY9"/>
<dbReference type="PDBsum" id="4MQU"/>
<dbReference type="PDBsum" id="4MRO"/>
<dbReference type="PDBsum" id="4MSU"/>
<dbReference type="PDBsum" id="4OHK"/>
<dbReference type="PDBsum" id="4OHM"/>
<dbReference type="PDBsum" id="4OHO"/>
<dbReference type="PDBsum" id="4OHP"/>
<dbReference type="PDBsum" id="4OLH"/>
<dbReference type="PDBsum" id="4OP1"/>
<dbReference type="PDBsum" id="4OP2"/>
<dbReference type="PDBsum" id="4OP3"/>
<dbReference type="PDBsum" id="4PX2"/>
<dbReference type="PDBsum" id="4PX3"/>
<dbReference type="PDBsum" id="4PX5"/>
<dbReference type="PDBsum" id="4PXS"/>
<dbReference type="SMR" id="Q14397"/>
<dbReference type="BioGRID" id="108916">
    <property type="interactions" value="14"/>
</dbReference>
<dbReference type="FunCoup" id="Q14397">
    <property type="interactions" value="797"/>
</dbReference>
<dbReference type="IntAct" id="Q14397">
    <property type="interactions" value="4"/>
</dbReference>
<dbReference type="MINT" id="Q14397"/>
<dbReference type="STRING" id="9606.ENSP00000264717"/>
<dbReference type="BindingDB" id="Q14397"/>
<dbReference type="ChEMBL" id="CHEMBL1075152"/>
<dbReference type="iPTMnet" id="Q14397"/>
<dbReference type="PhosphoSitePlus" id="Q14397"/>
<dbReference type="BioMuta" id="GCKR"/>
<dbReference type="DMDM" id="327478611"/>
<dbReference type="jPOST" id="Q14397"/>
<dbReference type="MassIVE" id="Q14397"/>
<dbReference type="PaxDb" id="9606-ENSP00000264717"/>
<dbReference type="PeptideAtlas" id="Q14397"/>
<dbReference type="ProteomicsDB" id="4803"/>
<dbReference type="ProteomicsDB" id="59979">
    <molecule id="Q14397-1"/>
</dbReference>
<dbReference type="DNASU" id="2646"/>
<dbReference type="GeneID" id="2646"/>
<dbReference type="KEGG" id="hsa:2646"/>
<dbReference type="UCSC" id="uc002rky.4">
    <molecule id="Q14397-1"/>
    <property type="organism name" value="human"/>
</dbReference>
<dbReference type="AGR" id="HGNC:4196"/>
<dbReference type="CTD" id="2646"/>
<dbReference type="DisGeNET" id="2646"/>
<dbReference type="GeneCards" id="GCKR"/>
<dbReference type="HGNC" id="HGNC:4196">
    <property type="gene designation" value="GCKR"/>
</dbReference>
<dbReference type="MalaCards" id="GCKR"/>
<dbReference type="MIM" id="600842">
    <property type="type" value="gene"/>
</dbReference>
<dbReference type="MIM" id="613463">
    <property type="type" value="phenotype"/>
</dbReference>
<dbReference type="neXtProt" id="NX_Q14397"/>
<dbReference type="PharmGKB" id="PA28611"/>
<dbReference type="VEuPathDB" id="HostDB:ENSG00000084734"/>
<dbReference type="eggNOG" id="ENOG502QS2J">
    <property type="taxonomic scope" value="Eukaryota"/>
</dbReference>
<dbReference type="HOGENOM" id="CLU_1739896_0_0_1"/>
<dbReference type="InParanoid" id="Q14397"/>
<dbReference type="OrthoDB" id="311172at2759"/>
<dbReference type="PAN-GO" id="Q14397">
    <property type="GO annotations" value="10 GO annotations based on evolutionary models"/>
</dbReference>
<dbReference type="PhylomeDB" id="Q14397"/>
<dbReference type="TreeFam" id="TF329177"/>
<dbReference type="PathwayCommons" id="Q14397"/>
<dbReference type="Reactome" id="R-HSA-170822">
    <property type="pathway name" value="Regulation of Glucokinase by Glucokinase Regulatory Protein"/>
</dbReference>
<dbReference type="Reactome" id="R-HSA-5619107">
    <property type="pathway name" value="Defective TPR may confer susceptibility towards thyroid papillary carcinoma (TPC)"/>
</dbReference>
<dbReference type="SignaLink" id="Q14397"/>
<dbReference type="BioGRID-ORCS" id="2646">
    <property type="hits" value="9 hits in 1159 CRISPR screens"/>
</dbReference>
<dbReference type="EvolutionaryTrace" id="Q14397"/>
<dbReference type="GenomeRNAi" id="2646"/>
<dbReference type="Pharos" id="Q14397">
    <property type="development level" value="Tchem"/>
</dbReference>
<dbReference type="PRO" id="PR:Q14397"/>
<dbReference type="Proteomes" id="UP000005640">
    <property type="component" value="Chromosome 2"/>
</dbReference>
<dbReference type="RNAct" id="Q14397">
    <property type="molecule type" value="protein"/>
</dbReference>
<dbReference type="Bgee" id="ENSG00000084734">
    <property type="expression patterns" value="Expressed in right lobe of liver and 98 other cell types or tissues"/>
</dbReference>
<dbReference type="ExpressionAtlas" id="Q14397">
    <property type="expression patterns" value="baseline and differential"/>
</dbReference>
<dbReference type="GO" id="GO:0005737">
    <property type="term" value="C:cytoplasm"/>
    <property type="evidence" value="ECO:0000250"/>
    <property type="project" value="UniProtKB"/>
</dbReference>
<dbReference type="GO" id="GO:0005829">
    <property type="term" value="C:cytosol"/>
    <property type="evidence" value="ECO:0000304"/>
    <property type="project" value="Reactome"/>
</dbReference>
<dbReference type="GO" id="GO:0005739">
    <property type="term" value="C:mitochondrion"/>
    <property type="evidence" value="ECO:0007669"/>
    <property type="project" value="UniProtKB-SubCell"/>
</dbReference>
<dbReference type="GO" id="GO:0005654">
    <property type="term" value="C:nucleoplasm"/>
    <property type="evidence" value="ECO:0000250"/>
    <property type="project" value="UniProtKB"/>
</dbReference>
<dbReference type="GO" id="GO:0070095">
    <property type="term" value="F:fructose-6-phosphate binding"/>
    <property type="evidence" value="ECO:0000314"/>
    <property type="project" value="UniProtKB"/>
</dbReference>
<dbReference type="GO" id="GO:0141089">
    <property type="term" value="F:glucose sensor activity"/>
    <property type="evidence" value="ECO:0000314"/>
    <property type="project" value="BHF-UCL"/>
</dbReference>
<dbReference type="GO" id="GO:0019210">
    <property type="term" value="F:kinase inhibitor activity"/>
    <property type="evidence" value="ECO:0000314"/>
    <property type="project" value="BHF-UCL"/>
</dbReference>
<dbReference type="GO" id="GO:1901135">
    <property type="term" value="P:carbohydrate derivative metabolic process"/>
    <property type="evidence" value="ECO:0007669"/>
    <property type="project" value="InterPro"/>
</dbReference>
<dbReference type="GO" id="GO:0001678">
    <property type="term" value="P:intracellular glucose homeostasis"/>
    <property type="evidence" value="ECO:0000318"/>
    <property type="project" value="GO_Central"/>
</dbReference>
<dbReference type="GO" id="GO:0033132">
    <property type="term" value="P:negative regulation of glucokinase activity"/>
    <property type="evidence" value="ECO:0000314"/>
    <property type="project" value="UniProtKB"/>
</dbReference>
<dbReference type="GO" id="GO:0006606">
    <property type="term" value="P:protein import into nucleus"/>
    <property type="evidence" value="ECO:0000250"/>
    <property type="project" value="BHF-UCL"/>
</dbReference>
<dbReference type="GO" id="GO:0034504">
    <property type="term" value="P:protein localization to nucleus"/>
    <property type="evidence" value="ECO:0000318"/>
    <property type="project" value="GO_Central"/>
</dbReference>
<dbReference type="GO" id="GO:0009750">
    <property type="term" value="P:response to fructose"/>
    <property type="evidence" value="ECO:0000314"/>
    <property type="project" value="BHF-UCL"/>
</dbReference>
<dbReference type="GO" id="GO:0009749">
    <property type="term" value="P:response to glucose"/>
    <property type="evidence" value="ECO:0000314"/>
    <property type="project" value="BHF-UCL"/>
</dbReference>
<dbReference type="GO" id="GO:0070328">
    <property type="term" value="P:triglyceride homeostasis"/>
    <property type="evidence" value="ECO:0000315"/>
    <property type="project" value="BHF-UCL"/>
</dbReference>
<dbReference type="GO" id="GO:0046415">
    <property type="term" value="P:urate metabolic process"/>
    <property type="evidence" value="ECO:0000315"/>
    <property type="project" value="BHF-UCL"/>
</dbReference>
<dbReference type="FunFam" id="1.10.8.1080:FF:000002">
    <property type="entry name" value="Glucokinase regulatory protein"/>
    <property type="match status" value="1"/>
</dbReference>
<dbReference type="FunFam" id="3.40.50.10490:FF:000033">
    <property type="entry name" value="Glucokinase regulatory protein"/>
    <property type="match status" value="1"/>
</dbReference>
<dbReference type="FunFam" id="3.40.50.12620:FF:000001">
    <property type="entry name" value="Glucokinase regulatory protein"/>
    <property type="match status" value="1"/>
</dbReference>
<dbReference type="Gene3D" id="1.10.8.1080">
    <property type="match status" value="1"/>
</dbReference>
<dbReference type="Gene3D" id="3.40.50.12620">
    <property type="match status" value="1"/>
</dbReference>
<dbReference type="Gene3D" id="3.40.50.10490">
    <property type="entry name" value="Glucose-6-phosphate isomerase like protein, domain 1"/>
    <property type="match status" value="1"/>
</dbReference>
<dbReference type="InterPro" id="IPR054017">
    <property type="entry name" value="GKRP_SIS_2"/>
</dbReference>
<dbReference type="InterPro" id="IPR005486">
    <property type="entry name" value="Glucokinase_regulatory_CS"/>
</dbReference>
<dbReference type="InterPro" id="IPR040190">
    <property type="entry name" value="MURQ/GCKR"/>
</dbReference>
<dbReference type="InterPro" id="IPR001347">
    <property type="entry name" value="SIS_dom"/>
</dbReference>
<dbReference type="InterPro" id="IPR046348">
    <property type="entry name" value="SIS_dom_sf"/>
</dbReference>
<dbReference type="PANTHER" id="PTHR10088">
    <property type="entry name" value="GLUCOKINASE REGULATORY PROTEIN"/>
    <property type="match status" value="1"/>
</dbReference>
<dbReference type="PANTHER" id="PTHR10088:SF4">
    <property type="entry name" value="GLUCOKINASE REGULATORY PROTEIN"/>
    <property type="match status" value="1"/>
</dbReference>
<dbReference type="Pfam" id="PF20741">
    <property type="entry name" value="GKRP-like_C"/>
    <property type="match status" value="1"/>
</dbReference>
<dbReference type="Pfam" id="PF22198">
    <property type="entry name" value="GKRP_SIS_2"/>
    <property type="match status" value="1"/>
</dbReference>
<dbReference type="Pfam" id="PF22645">
    <property type="entry name" value="GKRP_SIS_N"/>
    <property type="match status" value="1"/>
</dbReference>
<dbReference type="SUPFAM" id="SSF53697">
    <property type="entry name" value="SIS domain"/>
    <property type="match status" value="2"/>
</dbReference>
<dbReference type="PROSITE" id="PS01272">
    <property type="entry name" value="GCKR"/>
    <property type="match status" value="1"/>
</dbReference>
<dbReference type="PROSITE" id="PS51464">
    <property type="entry name" value="SIS"/>
    <property type="match status" value="2"/>
</dbReference>
<sequence length="625" mass="68685">MPGTKRFQHVIETPEPGKWELSGYEAAVPITEKSNPLTQDLDKADAENIVRLLGQCDAEIFQEEGQALSTYQRLYSESILTTMVQVAGKVQEVLKEPDGGLVVLSGGGTSGRMAFLMSVSFNQLMKGLGQKPLYTYLIAGGDRSVVASREGTEDSALHGIEELKKVAAGKKRVIVIGISVGLSAPFVAGQMDCCMNNTAVFLPVLVGFNPVSMARNDPIEDWSSTFRQVAERMQKMQEKQKAFVLNPAIGPEGLSGSSRMKGGSATKILLETLLLAAHKTVDQGIAASQRCLLEILRTFERAHQVTYSQSPKIATLMKSVSTSLEKKGHVYLVGWQTLGIIAIMDGVECIHTFGADFRDVRGFLIGDHSDMFNQKAELTNQGPQFTFSQEDFLTSILPSLTEIDTVVFIFTLDDNLTEVQTIVEQVKEKTNHIQALAHSTVGQTLPIPLKKLFPSIISITWPLLFFEYEGNFIQKFQRELSTKWVLNTVSTGAHVLLGKILQNHMLDLRISNSKLFWRALAMLQRFSGQSKARCIESLLRAIHFPQPLSDDIRAAPISCHVQVAHEKEQVIPIALLSLLFRCSITEAQAHLAAAPSVCEAVRSALAGPGQKRTADPLEILEPDVQ</sequence>
<organism>
    <name type="scientific">Homo sapiens</name>
    <name type="common">Human</name>
    <dbReference type="NCBI Taxonomy" id="9606"/>
    <lineage>
        <taxon>Eukaryota</taxon>
        <taxon>Metazoa</taxon>
        <taxon>Chordata</taxon>
        <taxon>Craniata</taxon>
        <taxon>Vertebrata</taxon>
        <taxon>Euteleostomi</taxon>
        <taxon>Mammalia</taxon>
        <taxon>Eutheria</taxon>
        <taxon>Euarchontoglires</taxon>
        <taxon>Primates</taxon>
        <taxon>Haplorrhini</taxon>
        <taxon>Catarrhini</taxon>
        <taxon>Hominidae</taxon>
        <taxon>Homo</taxon>
    </lineage>
</organism>
<gene>
    <name evidence="14 17" type="primary">GCKR</name>
</gene>
<proteinExistence type="evidence at protein level"/>
<name>GCKR_HUMAN</name>
<reference key="1">
    <citation type="journal article" date="1995" name="Mamm. Genome">
        <title>Human glucokinase regulatory protein (GCKR): cDNA and genomic cloning, complete primary structure, and chromosomal localization.</title>
        <authorList>
            <person name="Warner J.P."/>
            <person name="Leek J.P."/>
            <person name="Intody S."/>
            <person name="Markham A.F."/>
            <person name="Bonthron D.T."/>
        </authorList>
    </citation>
    <scope>NUCLEOTIDE SEQUENCE [GENOMIC DNA / MRNA]</scope>
    <source>
        <tissue>Hepatoblastoma</tissue>
    </source>
</reference>
<reference key="2">
    <citation type="journal article" date="1998" name="Genomics">
        <title>Organization of the human glucokinase regulator gene GCKR.</title>
        <authorList>
            <person name="Hayward B.E."/>
            <person name="Dunlop N."/>
            <person name="Intody S."/>
            <person name="Leek J.P."/>
            <person name="Markham A.F."/>
            <person name="Warner J.P."/>
            <person name="Bonthron D.T."/>
        </authorList>
    </citation>
    <scope>PARTIAL NUCLEOTIDE SEQUENCE [GENOMIC DNA]</scope>
    <scope>SEQUENCE REVISION TO 393 AND 560</scope>
    <scope>TISSUE SPECIFICITY</scope>
</reference>
<reference key="3">
    <citation type="submission" date="2003-06" db="EMBL/GenBank/DDBJ databases">
        <authorList>
            <consortium name="NIEHS SNPs program"/>
        </authorList>
    </citation>
    <scope>NUCLEOTIDE SEQUENCE [GENOMIC DNA]</scope>
    <scope>VARIANTS GLY-77; SER-256; LEU-446 AND GLN-540</scope>
</reference>
<reference key="4">
    <citation type="journal article" date="2004" name="Nat. Genet.">
        <title>Complete sequencing and characterization of 21,243 full-length human cDNAs.</title>
        <authorList>
            <person name="Ota T."/>
            <person name="Suzuki Y."/>
            <person name="Nishikawa T."/>
            <person name="Otsuki T."/>
            <person name="Sugiyama T."/>
            <person name="Irie R."/>
            <person name="Wakamatsu A."/>
            <person name="Hayashi K."/>
            <person name="Sato H."/>
            <person name="Nagai K."/>
            <person name="Kimura K."/>
            <person name="Makita H."/>
            <person name="Sekine M."/>
            <person name="Obayashi M."/>
            <person name="Nishi T."/>
            <person name="Shibahara T."/>
            <person name="Tanaka T."/>
            <person name="Ishii S."/>
            <person name="Yamamoto J."/>
            <person name="Saito K."/>
            <person name="Kawai Y."/>
            <person name="Isono Y."/>
            <person name="Nakamura Y."/>
            <person name="Nagahari K."/>
            <person name="Murakami K."/>
            <person name="Yasuda T."/>
            <person name="Iwayanagi T."/>
            <person name="Wagatsuma M."/>
            <person name="Shiratori A."/>
            <person name="Sudo H."/>
            <person name="Hosoiri T."/>
            <person name="Kaku Y."/>
            <person name="Kodaira H."/>
            <person name="Kondo H."/>
            <person name="Sugawara M."/>
            <person name="Takahashi M."/>
            <person name="Kanda K."/>
            <person name="Yokoi T."/>
            <person name="Furuya T."/>
            <person name="Kikkawa E."/>
            <person name="Omura Y."/>
            <person name="Abe K."/>
            <person name="Kamihara K."/>
            <person name="Katsuta N."/>
            <person name="Sato K."/>
            <person name="Tanikawa M."/>
            <person name="Yamazaki M."/>
            <person name="Ninomiya K."/>
            <person name="Ishibashi T."/>
            <person name="Yamashita H."/>
            <person name="Murakawa K."/>
            <person name="Fujimori K."/>
            <person name="Tanai H."/>
            <person name="Kimata M."/>
            <person name="Watanabe M."/>
            <person name="Hiraoka S."/>
            <person name="Chiba Y."/>
            <person name="Ishida S."/>
            <person name="Ono Y."/>
            <person name="Takiguchi S."/>
            <person name="Watanabe S."/>
            <person name="Yosida M."/>
            <person name="Hotuta T."/>
            <person name="Kusano J."/>
            <person name="Kanehori K."/>
            <person name="Takahashi-Fujii A."/>
            <person name="Hara H."/>
            <person name="Tanase T.-O."/>
            <person name="Nomura Y."/>
            <person name="Togiya S."/>
            <person name="Komai F."/>
            <person name="Hara R."/>
            <person name="Takeuchi K."/>
            <person name="Arita M."/>
            <person name="Imose N."/>
            <person name="Musashino K."/>
            <person name="Yuuki H."/>
            <person name="Oshima A."/>
            <person name="Sasaki N."/>
            <person name="Aotsuka S."/>
            <person name="Yoshikawa Y."/>
            <person name="Matsunawa H."/>
            <person name="Ichihara T."/>
            <person name="Shiohata N."/>
            <person name="Sano S."/>
            <person name="Moriya S."/>
            <person name="Momiyama H."/>
            <person name="Satoh N."/>
            <person name="Takami S."/>
            <person name="Terashima Y."/>
            <person name="Suzuki O."/>
            <person name="Nakagawa S."/>
            <person name="Senoh A."/>
            <person name="Mizoguchi H."/>
            <person name="Goto Y."/>
            <person name="Shimizu F."/>
            <person name="Wakebe H."/>
            <person name="Hishigaki H."/>
            <person name="Watanabe T."/>
            <person name="Sugiyama A."/>
            <person name="Takemoto M."/>
            <person name="Kawakami B."/>
            <person name="Yamazaki M."/>
            <person name="Watanabe K."/>
            <person name="Kumagai A."/>
            <person name="Itakura S."/>
            <person name="Fukuzumi Y."/>
            <person name="Fujimori Y."/>
            <person name="Komiyama M."/>
            <person name="Tashiro H."/>
            <person name="Tanigami A."/>
            <person name="Fujiwara T."/>
            <person name="Ono T."/>
            <person name="Yamada K."/>
            <person name="Fujii Y."/>
            <person name="Ozaki K."/>
            <person name="Hirao M."/>
            <person name="Ohmori Y."/>
            <person name="Kawabata A."/>
            <person name="Hikiji T."/>
            <person name="Kobatake N."/>
            <person name="Inagaki H."/>
            <person name="Ikema Y."/>
            <person name="Okamoto S."/>
            <person name="Okitani R."/>
            <person name="Kawakami T."/>
            <person name="Noguchi S."/>
            <person name="Itoh T."/>
            <person name="Shigeta K."/>
            <person name="Senba T."/>
            <person name="Matsumura K."/>
            <person name="Nakajima Y."/>
            <person name="Mizuno T."/>
            <person name="Morinaga M."/>
            <person name="Sasaki M."/>
            <person name="Togashi T."/>
            <person name="Oyama M."/>
            <person name="Hata H."/>
            <person name="Watanabe M."/>
            <person name="Komatsu T."/>
            <person name="Mizushima-Sugano J."/>
            <person name="Satoh T."/>
            <person name="Shirai Y."/>
            <person name="Takahashi Y."/>
            <person name="Nakagawa K."/>
            <person name="Okumura K."/>
            <person name="Nagase T."/>
            <person name="Nomura N."/>
            <person name="Kikuchi H."/>
            <person name="Masuho Y."/>
            <person name="Yamashita R."/>
            <person name="Nakai K."/>
            <person name="Yada T."/>
            <person name="Nakamura Y."/>
            <person name="Ohara O."/>
            <person name="Isogai T."/>
            <person name="Sugano S."/>
        </authorList>
    </citation>
    <scope>NUCLEOTIDE SEQUENCE [LARGE SCALE MRNA] (ISOFORM 2)</scope>
    <source>
        <tissue>Liver</tissue>
    </source>
</reference>
<reference key="5">
    <citation type="journal article" date="2005" name="Nature">
        <title>Generation and annotation of the DNA sequences of human chromosomes 2 and 4.</title>
        <authorList>
            <person name="Hillier L.W."/>
            <person name="Graves T.A."/>
            <person name="Fulton R.S."/>
            <person name="Fulton L.A."/>
            <person name="Pepin K.H."/>
            <person name="Minx P."/>
            <person name="Wagner-McPherson C."/>
            <person name="Layman D."/>
            <person name="Wylie K."/>
            <person name="Sekhon M."/>
            <person name="Becker M.C."/>
            <person name="Fewell G.A."/>
            <person name="Delehaunty K.D."/>
            <person name="Miner T.L."/>
            <person name="Nash W.E."/>
            <person name="Kremitzki C."/>
            <person name="Oddy L."/>
            <person name="Du H."/>
            <person name="Sun H."/>
            <person name="Bradshaw-Cordum H."/>
            <person name="Ali J."/>
            <person name="Carter J."/>
            <person name="Cordes M."/>
            <person name="Harris A."/>
            <person name="Isak A."/>
            <person name="van Brunt A."/>
            <person name="Nguyen C."/>
            <person name="Du F."/>
            <person name="Courtney L."/>
            <person name="Kalicki J."/>
            <person name="Ozersky P."/>
            <person name="Abbott S."/>
            <person name="Armstrong J."/>
            <person name="Belter E.A."/>
            <person name="Caruso L."/>
            <person name="Cedroni M."/>
            <person name="Cotton M."/>
            <person name="Davidson T."/>
            <person name="Desai A."/>
            <person name="Elliott G."/>
            <person name="Erb T."/>
            <person name="Fronick C."/>
            <person name="Gaige T."/>
            <person name="Haakenson W."/>
            <person name="Haglund K."/>
            <person name="Holmes A."/>
            <person name="Harkins R."/>
            <person name="Kim K."/>
            <person name="Kruchowski S.S."/>
            <person name="Strong C.M."/>
            <person name="Grewal N."/>
            <person name="Goyea E."/>
            <person name="Hou S."/>
            <person name="Levy A."/>
            <person name="Martinka S."/>
            <person name="Mead K."/>
            <person name="McLellan M.D."/>
            <person name="Meyer R."/>
            <person name="Randall-Maher J."/>
            <person name="Tomlinson C."/>
            <person name="Dauphin-Kohlberg S."/>
            <person name="Kozlowicz-Reilly A."/>
            <person name="Shah N."/>
            <person name="Swearengen-Shahid S."/>
            <person name="Snider J."/>
            <person name="Strong J.T."/>
            <person name="Thompson J."/>
            <person name="Yoakum M."/>
            <person name="Leonard S."/>
            <person name="Pearman C."/>
            <person name="Trani L."/>
            <person name="Radionenko M."/>
            <person name="Waligorski J.E."/>
            <person name="Wang C."/>
            <person name="Rock S.M."/>
            <person name="Tin-Wollam A.-M."/>
            <person name="Maupin R."/>
            <person name="Latreille P."/>
            <person name="Wendl M.C."/>
            <person name="Yang S.-P."/>
            <person name="Pohl C."/>
            <person name="Wallis J.W."/>
            <person name="Spieth J."/>
            <person name="Bieri T.A."/>
            <person name="Berkowicz N."/>
            <person name="Nelson J.O."/>
            <person name="Osborne J."/>
            <person name="Ding L."/>
            <person name="Meyer R."/>
            <person name="Sabo A."/>
            <person name="Shotland Y."/>
            <person name="Sinha P."/>
            <person name="Wohldmann P.E."/>
            <person name="Cook L.L."/>
            <person name="Hickenbotham M.T."/>
            <person name="Eldred J."/>
            <person name="Williams D."/>
            <person name="Jones T.A."/>
            <person name="She X."/>
            <person name="Ciccarelli F.D."/>
            <person name="Izaurralde E."/>
            <person name="Taylor J."/>
            <person name="Schmutz J."/>
            <person name="Myers R.M."/>
            <person name="Cox D.R."/>
            <person name="Huang X."/>
            <person name="McPherson J.D."/>
            <person name="Mardis E.R."/>
            <person name="Clifton S.W."/>
            <person name="Warren W.C."/>
            <person name="Chinwalla A.T."/>
            <person name="Eddy S.R."/>
            <person name="Marra M.A."/>
            <person name="Ovcharenko I."/>
            <person name="Furey T.S."/>
            <person name="Miller W."/>
            <person name="Eichler E.E."/>
            <person name="Bork P."/>
            <person name="Suyama M."/>
            <person name="Torrents D."/>
            <person name="Waterston R.H."/>
            <person name="Wilson R.K."/>
        </authorList>
    </citation>
    <scope>NUCLEOTIDE SEQUENCE [LARGE SCALE GENOMIC DNA]</scope>
    <scope>VARIANT LEU-446</scope>
</reference>
<reference key="6">
    <citation type="journal article" date="2004" name="Genome Res.">
        <title>The status, quality, and expansion of the NIH full-length cDNA project: the Mammalian Gene Collection (MGC).</title>
        <authorList>
            <consortium name="The MGC Project Team"/>
        </authorList>
    </citation>
    <scope>NUCLEOTIDE SEQUENCE [LARGE SCALE MRNA]</scope>
</reference>
<reference key="7">
    <citation type="journal article" date="1999" name="FEBS Lett.">
        <title>Glucokinase regulatory protein is essential for the proper subcellular localisation of liver glucokinase.</title>
        <authorList>
            <person name="de la Iglesia N."/>
            <person name="Veiga-da-Cunha M."/>
            <person name="Van Schaftingen E."/>
            <person name="Guinovart J.J."/>
            <person name="Ferrer J.C."/>
        </authorList>
    </citation>
    <scope>SUBCELLULAR LOCATION</scope>
    <scope>SUBUNIT</scope>
</reference>
<reference key="8">
    <citation type="journal article" date="2008" name="Diabetes">
        <title>The common P446L polymorphism in GCKR inversely modulates fasting glucose and triglyceride levels and reduces type 2 diabetes risk in the DESIR prospective general French population.</title>
        <authorList>
            <person name="Vaxillaire M."/>
            <person name="Cavalcanti-Proenca C."/>
            <person name="Dechaume A."/>
            <person name="Tichet J."/>
            <person name="Marre M."/>
            <person name="Balkau B."/>
            <person name="Froguel P."/>
        </authorList>
    </citation>
    <scope>INVOLVEMENT IN FGQTL5</scope>
    <scope>VARIANT LEU-446</scope>
    <scope>ASSOCIATION WITH LOWER RISK FOR DIABETES TYPE 2</scope>
</reference>
<reference key="9">
    <citation type="journal article" date="2009" name="Hum. Mol. Genet.">
        <title>The P446L variant in GCKR associated with fasting plasma glucose and triglyceride levels exerts its effect through increased glucokinase activity in liver.</title>
        <authorList>
            <person name="Beer N.L."/>
            <person name="Tribble N.D."/>
            <person name="McCulloch L.J."/>
            <person name="Roos C."/>
            <person name="Johnson P.R."/>
            <person name="Orho-Melander M."/>
            <person name="Gloyn A.L."/>
        </authorList>
    </citation>
    <scope>TISSUE SPECIFICITY</scope>
    <scope>CHARACTERIZATION OF VARIANT LEU-446</scope>
</reference>
<reference key="10">
    <citation type="journal article" date="2013" name="Proc. Natl. Acad. Sci. U.S.A.">
        <title>Molecular basis for the role of glucokinase regulatory protein as the allosteric switch for glucokinase.</title>
        <authorList>
            <person name="Choi J.M."/>
            <person name="Seo M.H."/>
            <person name="Kyeong H.H."/>
            <person name="Kim E."/>
            <person name="Kim H.S."/>
        </authorList>
    </citation>
    <scope>FUNCTION</scope>
    <scope>INTERACTION WITH GCK</scope>
    <scope>MUTAGENESIS OF ASP-413 AND 463-LEU--PHE-465</scope>
</reference>
<reference evidence="18 19" key="11">
    <citation type="journal article" date="2013" name="Biochemistry">
        <title>Crystal structure of glucokinase regulatory protein.</title>
        <authorList>
            <person name="Pautsch A."/>
            <person name="Stadler N."/>
            <person name="Lohle A."/>
            <person name="Rist W."/>
            <person name="Berg A."/>
            <person name="Glocker L."/>
            <person name="Nar H."/>
            <person name="Reinert D."/>
            <person name="Lenter M."/>
            <person name="Heckel A."/>
            <person name="Schnapp G."/>
            <person name="Kauschke S.G."/>
        </authorList>
    </citation>
    <scope>X-RAY CRYSTALLOGRAPHY (1.47 ANGSTROMS) IN COMPLEX WITH BETA-D-FRUCTOSE-1-PHOSPHATE</scope>
    <scope>FUNCTION</scope>
    <scope>INTERACTION WITH GCK</scope>
    <scope>MUTAGENESIS OF 326-LYS-LYS-327 AND 450-LYS-LYS-451</scope>
</reference>
<reference key="12">
    <citation type="journal article" date="2008" name="Diabetes">
        <title>Common missense variant in the glucokinase regulatory protein gene is associated with increased plasma triglyceride and C-reactive protein but lower fasting glucose concentrations.</title>
        <authorList>
            <person name="Orho-Melander M."/>
            <person name="Melander O."/>
            <person name="Guiducci C."/>
            <person name="Perez-Martinez P."/>
            <person name="Corella D."/>
            <person name="Roos C."/>
            <person name="Tewhey R."/>
            <person name="Rieder M.J."/>
            <person name="Hall J."/>
            <person name="Abecasis G."/>
            <person name="Tai E.S."/>
            <person name="Welch C."/>
            <person name="Arnett D.K."/>
            <person name="Lyssenko V."/>
            <person name="Lindholm E."/>
            <person name="Saxena R."/>
            <person name="de Bakker P.I."/>
            <person name="Burtt N."/>
            <person name="Voight B.F."/>
            <person name="Hirschhorn J.N."/>
            <person name="Tucker K.L."/>
            <person name="Hedner T."/>
            <person name="Tuomi T."/>
            <person name="Isomaa B."/>
            <person name="Eriksson K.F."/>
            <person name="Taskinen M.R."/>
            <person name="Wahlstrand B."/>
            <person name="Hughes T.E."/>
            <person name="Parnell L.D."/>
            <person name="Lai C.Q."/>
            <person name="Berglund G."/>
            <person name="Peltonen L."/>
            <person name="Vartiainen E."/>
            <person name="Jousilahti P."/>
            <person name="Havulinna A.S."/>
            <person name="Salomaa V."/>
            <person name="Nilsson P."/>
            <person name="Groop L."/>
            <person name="Altshuler D."/>
            <person name="Ordovas J.M."/>
            <person name="Kathiresan S."/>
        </authorList>
    </citation>
    <scope>VARIANT LEU-446</scope>
    <scope>INVOLVEMENT IN FGQTL5</scope>
    <scope>ASSOCIATION WITH HIGH PLASMA TRIGLYCERIDE LEVELS</scope>
</reference>